<feature type="chain" id="PRO_0000163448" description="Large ribosomal subunit protein bL19">
    <location>
        <begin position="1"/>
        <end position="166"/>
    </location>
</feature>
<feature type="helix" evidence="10">
    <location>
        <begin position="9"/>
        <end position="18"/>
    </location>
</feature>
<feature type="strand" evidence="12">
    <location>
        <begin position="28"/>
        <end position="30"/>
    </location>
</feature>
<feature type="strand" evidence="10">
    <location>
        <begin position="32"/>
        <end position="40"/>
    </location>
</feature>
<feature type="strand" evidence="9">
    <location>
        <begin position="41"/>
        <end position="43"/>
    </location>
</feature>
<feature type="strand" evidence="10">
    <location>
        <begin position="45"/>
        <end position="58"/>
    </location>
</feature>
<feature type="helix" evidence="10">
    <location>
        <begin position="61"/>
        <end position="63"/>
    </location>
</feature>
<feature type="strand" evidence="10">
    <location>
        <begin position="65"/>
        <end position="72"/>
    </location>
</feature>
<feature type="strand" evidence="10">
    <location>
        <begin position="75"/>
        <end position="82"/>
    </location>
</feature>
<feature type="strand" evidence="10">
    <location>
        <begin position="88"/>
        <end position="95"/>
    </location>
</feature>
<feature type="strand" evidence="10">
    <location>
        <begin position="100"/>
        <end position="102"/>
    </location>
</feature>
<feature type="helix" evidence="9">
    <location>
        <begin position="105"/>
        <end position="107"/>
    </location>
</feature>
<feature type="turn" evidence="11">
    <location>
        <begin position="108"/>
        <end position="110"/>
    </location>
</feature>
<feature type="strand" evidence="12">
    <location>
        <begin position="112"/>
        <end position="115"/>
    </location>
</feature>
<sequence>MQTHIKINRGELLRGIEQDHTRQLPDFRPGDTVRVDTKVREGNRTRSQAFEGVVIAINGSGSRKSFTVRKISFGEGVERVFPFASPLVNQVTIVERGKVRRAKLYYLRELRGKAARIKSDRSRVMKDAARAQQDKANASASQAAAAQADVTVISAAPEVAPETQGE</sequence>
<keyword id="KW-0002">3D-structure</keyword>
<keyword id="KW-0903">Direct protein sequencing</keyword>
<keyword id="KW-1185">Reference proteome</keyword>
<keyword id="KW-0687">Ribonucleoprotein</keyword>
<keyword id="KW-0689">Ribosomal protein</keyword>
<keyword id="KW-0694">RNA-binding</keyword>
<keyword id="KW-0699">rRNA-binding</keyword>
<organism>
    <name type="scientific">Deinococcus radiodurans (strain ATCC 13939 / DSM 20539 / JCM 16871 / CCUG 27074 / LMG 4051 / NBRC 15346 / NCIMB 9279 / VKM B-1422 / R1)</name>
    <dbReference type="NCBI Taxonomy" id="243230"/>
    <lineage>
        <taxon>Bacteria</taxon>
        <taxon>Thermotogati</taxon>
        <taxon>Deinococcota</taxon>
        <taxon>Deinococci</taxon>
        <taxon>Deinococcales</taxon>
        <taxon>Deinococcaceae</taxon>
        <taxon>Deinococcus</taxon>
    </lineage>
</organism>
<name>RL19_DEIRA</name>
<protein>
    <recommendedName>
        <fullName evidence="8">Large ribosomal subunit protein bL19</fullName>
    </recommendedName>
    <alternativeName>
        <fullName>50S ribosomal protein L19</fullName>
    </alternativeName>
</protein>
<dbReference type="EMBL" id="AE000513">
    <property type="protein sequence ID" value="AAF10334.1"/>
    <property type="molecule type" value="Genomic_DNA"/>
</dbReference>
<dbReference type="PIR" id="G75478">
    <property type="entry name" value="G75478"/>
</dbReference>
<dbReference type="RefSeq" id="NP_294479.1">
    <property type="nucleotide sequence ID" value="NC_001263.1"/>
</dbReference>
<dbReference type="RefSeq" id="WP_010887401.1">
    <property type="nucleotide sequence ID" value="NC_001263.1"/>
</dbReference>
<dbReference type="PDB" id="1NKW">
    <property type="method" value="X-ray"/>
    <property type="resolution" value="3.10 A"/>
    <property type="chains" value="N=1-166"/>
</dbReference>
<dbReference type="PDB" id="1NWX">
    <property type="method" value="X-ray"/>
    <property type="resolution" value="3.50 A"/>
    <property type="chains" value="N=1-166"/>
</dbReference>
<dbReference type="PDB" id="1NWY">
    <property type="method" value="X-ray"/>
    <property type="resolution" value="3.30 A"/>
    <property type="chains" value="N=1-166"/>
</dbReference>
<dbReference type="PDB" id="1SM1">
    <property type="method" value="X-ray"/>
    <property type="resolution" value="3.42 A"/>
    <property type="chains" value="N=1-166"/>
</dbReference>
<dbReference type="PDB" id="1XBP">
    <property type="method" value="X-ray"/>
    <property type="resolution" value="3.50 A"/>
    <property type="chains" value="N=1-166"/>
</dbReference>
<dbReference type="PDB" id="2ZJP">
    <property type="method" value="X-ray"/>
    <property type="resolution" value="3.70 A"/>
    <property type="chains" value="M=1-166"/>
</dbReference>
<dbReference type="PDB" id="2ZJQ">
    <property type="method" value="X-ray"/>
    <property type="resolution" value="3.30 A"/>
    <property type="chains" value="M=1-166"/>
</dbReference>
<dbReference type="PDB" id="2ZJR">
    <property type="method" value="X-ray"/>
    <property type="resolution" value="2.91 A"/>
    <property type="chains" value="M=1-166"/>
</dbReference>
<dbReference type="PDB" id="3CF5">
    <property type="method" value="X-ray"/>
    <property type="resolution" value="3.30 A"/>
    <property type="chains" value="M=1-166"/>
</dbReference>
<dbReference type="PDB" id="3DLL">
    <property type="method" value="X-ray"/>
    <property type="resolution" value="3.50 A"/>
    <property type="chains" value="M=1-166"/>
</dbReference>
<dbReference type="PDB" id="3PIO">
    <property type="method" value="X-ray"/>
    <property type="resolution" value="3.25 A"/>
    <property type="chains" value="M=1-166"/>
</dbReference>
<dbReference type="PDB" id="3PIP">
    <property type="method" value="X-ray"/>
    <property type="resolution" value="3.45 A"/>
    <property type="chains" value="M=1-166"/>
</dbReference>
<dbReference type="PDB" id="4IO9">
    <property type="method" value="X-ray"/>
    <property type="resolution" value="3.20 A"/>
    <property type="chains" value="M=1-166"/>
</dbReference>
<dbReference type="PDB" id="4IOA">
    <property type="method" value="X-ray"/>
    <property type="resolution" value="3.20 A"/>
    <property type="chains" value="M=1-166"/>
</dbReference>
<dbReference type="PDB" id="4IOC">
    <property type="method" value="X-ray"/>
    <property type="resolution" value="3.60 A"/>
    <property type="chains" value="M=1-166"/>
</dbReference>
<dbReference type="PDB" id="4U67">
    <property type="method" value="X-ray"/>
    <property type="resolution" value="3.65 A"/>
    <property type="chains" value="M=1-166"/>
</dbReference>
<dbReference type="PDB" id="4V49">
    <property type="method" value="X-ray"/>
    <property type="resolution" value="8.70 A"/>
    <property type="chains" value="N=2-126"/>
</dbReference>
<dbReference type="PDB" id="4V4A">
    <property type="method" value="X-ray"/>
    <property type="resolution" value="9.50 A"/>
    <property type="chains" value="N=2-126"/>
</dbReference>
<dbReference type="PDB" id="4V4G">
    <property type="method" value="X-ray"/>
    <property type="resolution" value="11.50 A"/>
    <property type="chains" value="Q=2-126"/>
</dbReference>
<dbReference type="PDB" id="4WFN">
    <property type="method" value="X-ray"/>
    <property type="resolution" value="3.54 A"/>
    <property type="chains" value="M=2-166"/>
</dbReference>
<dbReference type="PDB" id="5DM6">
    <property type="method" value="X-ray"/>
    <property type="resolution" value="2.90 A"/>
    <property type="chains" value="M=2-106"/>
</dbReference>
<dbReference type="PDB" id="5DM7">
    <property type="method" value="X-ray"/>
    <property type="resolution" value="3.00 A"/>
    <property type="chains" value="M=2-115"/>
</dbReference>
<dbReference type="PDB" id="5JVG">
    <property type="method" value="X-ray"/>
    <property type="resolution" value="3.43 A"/>
    <property type="chains" value="M=1-166"/>
</dbReference>
<dbReference type="PDB" id="5JVH">
    <property type="method" value="X-ray"/>
    <property type="resolution" value="3.58 A"/>
    <property type="chains" value="M=1-166"/>
</dbReference>
<dbReference type="PDB" id="7A0R">
    <property type="method" value="X-ray"/>
    <property type="resolution" value="3.30 A"/>
    <property type="chains" value="M=1-113"/>
</dbReference>
<dbReference type="PDB" id="7A0S">
    <property type="method" value="X-ray"/>
    <property type="resolution" value="3.22 A"/>
    <property type="chains" value="M=1-166"/>
</dbReference>
<dbReference type="PDB" id="7A18">
    <property type="method" value="X-ray"/>
    <property type="resolution" value="3.40 A"/>
    <property type="chains" value="M=2-119"/>
</dbReference>
<dbReference type="PDBsum" id="1NKW"/>
<dbReference type="PDBsum" id="1NWX"/>
<dbReference type="PDBsum" id="1NWY"/>
<dbReference type="PDBsum" id="1SM1"/>
<dbReference type="PDBsum" id="1XBP"/>
<dbReference type="PDBsum" id="2ZJP"/>
<dbReference type="PDBsum" id="2ZJQ"/>
<dbReference type="PDBsum" id="2ZJR"/>
<dbReference type="PDBsum" id="3CF5"/>
<dbReference type="PDBsum" id="3DLL"/>
<dbReference type="PDBsum" id="3PIO"/>
<dbReference type="PDBsum" id="3PIP"/>
<dbReference type="PDBsum" id="4IO9"/>
<dbReference type="PDBsum" id="4IOA"/>
<dbReference type="PDBsum" id="4IOC"/>
<dbReference type="PDBsum" id="4U67"/>
<dbReference type="PDBsum" id="4V49"/>
<dbReference type="PDBsum" id="4V4A"/>
<dbReference type="PDBsum" id="4V4G"/>
<dbReference type="PDBsum" id="4WFN"/>
<dbReference type="PDBsum" id="5DM6"/>
<dbReference type="PDBsum" id="5DM7"/>
<dbReference type="PDBsum" id="5JVG"/>
<dbReference type="PDBsum" id="5JVH"/>
<dbReference type="PDBsum" id="7A0R"/>
<dbReference type="PDBsum" id="7A0S"/>
<dbReference type="PDBsum" id="7A18"/>
<dbReference type="SMR" id="Q9RWB4"/>
<dbReference type="FunCoup" id="Q9RWB4">
    <property type="interactions" value="406"/>
</dbReference>
<dbReference type="IntAct" id="Q9RWB4">
    <property type="interactions" value="1"/>
</dbReference>
<dbReference type="STRING" id="243230.DR_0755"/>
<dbReference type="PaxDb" id="243230-DR_0755"/>
<dbReference type="EnsemblBacteria" id="AAF10334">
    <property type="protein sequence ID" value="AAF10334"/>
    <property type="gene ID" value="DR_0755"/>
</dbReference>
<dbReference type="GeneID" id="69517000"/>
<dbReference type="KEGG" id="dra:DR_0755"/>
<dbReference type="PATRIC" id="fig|243230.17.peg.935"/>
<dbReference type="eggNOG" id="COG0335">
    <property type="taxonomic scope" value="Bacteria"/>
</dbReference>
<dbReference type="HOGENOM" id="CLU_103507_0_2_0"/>
<dbReference type="InParanoid" id="Q9RWB4"/>
<dbReference type="OrthoDB" id="9803541at2"/>
<dbReference type="EvolutionaryTrace" id="Q9RWB4"/>
<dbReference type="Proteomes" id="UP000002524">
    <property type="component" value="Chromosome 1"/>
</dbReference>
<dbReference type="GO" id="GO:0022625">
    <property type="term" value="C:cytosolic large ribosomal subunit"/>
    <property type="evidence" value="ECO:0000318"/>
    <property type="project" value="GO_Central"/>
</dbReference>
<dbReference type="GO" id="GO:0019843">
    <property type="term" value="F:rRNA binding"/>
    <property type="evidence" value="ECO:0007669"/>
    <property type="project" value="UniProtKB-KW"/>
</dbReference>
<dbReference type="GO" id="GO:0003735">
    <property type="term" value="F:structural constituent of ribosome"/>
    <property type="evidence" value="ECO:0000318"/>
    <property type="project" value="GO_Central"/>
</dbReference>
<dbReference type="GO" id="GO:0006412">
    <property type="term" value="P:translation"/>
    <property type="evidence" value="ECO:0007669"/>
    <property type="project" value="UniProtKB-UniRule"/>
</dbReference>
<dbReference type="FunFam" id="2.30.30.790:FF:000001">
    <property type="entry name" value="50S ribosomal protein L19"/>
    <property type="match status" value="1"/>
</dbReference>
<dbReference type="Gene3D" id="2.30.30.790">
    <property type="match status" value="1"/>
</dbReference>
<dbReference type="HAMAP" id="MF_00402">
    <property type="entry name" value="Ribosomal_bL19"/>
    <property type="match status" value="1"/>
</dbReference>
<dbReference type="InterPro" id="IPR001857">
    <property type="entry name" value="Ribosomal_bL19"/>
</dbReference>
<dbReference type="InterPro" id="IPR018257">
    <property type="entry name" value="Ribosomal_bL19_CS"/>
</dbReference>
<dbReference type="InterPro" id="IPR038657">
    <property type="entry name" value="Ribosomal_bL19_sf"/>
</dbReference>
<dbReference type="InterPro" id="IPR008991">
    <property type="entry name" value="Translation_prot_SH3-like_sf"/>
</dbReference>
<dbReference type="NCBIfam" id="TIGR01024">
    <property type="entry name" value="rplS_bact"/>
    <property type="match status" value="1"/>
</dbReference>
<dbReference type="PANTHER" id="PTHR15680:SF9">
    <property type="entry name" value="LARGE RIBOSOMAL SUBUNIT PROTEIN BL19M"/>
    <property type="match status" value="1"/>
</dbReference>
<dbReference type="PANTHER" id="PTHR15680">
    <property type="entry name" value="RIBOSOMAL PROTEIN L19"/>
    <property type="match status" value="1"/>
</dbReference>
<dbReference type="Pfam" id="PF01245">
    <property type="entry name" value="Ribosomal_L19"/>
    <property type="match status" value="1"/>
</dbReference>
<dbReference type="PIRSF" id="PIRSF002191">
    <property type="entry name" value="Ribosomal_L19"/>
    <property type="match status" value="1"/>
</dbReference>
<dbReference type="PRINTS" id="PR00061">
    <property type="entry name" value="RIBOSOMALL19"/>
</dbReference>
<dbReference type="SUPFAM" id="SSF50104">
    <property type="entry name" value="Translation proteins SH3-like domain"/>
    <property type="match status" value="1"/>
</dbReference>
<dbReference type="PROSITE" id="PS01015">
    <property type="entry name" value="RIBOSOMAL_L19"/>
    <property type="match status" value="1"/>
</dbReference>
<comment type="function">
    <text evidence="1">This protein is located at the 30S-50S ribosomal subunit interface and may play a role in the structure and function of the aminoacyl-tRNA binding site (By similarity). Binds the 23S rRNA.</text>
</comment>
<comment type="subunit">
    <text evidence="2 3 4 5 6 7">Part of the 50S ribosomal subunit. Forms a cluster with proteins L3 and L14.</text>
</comment>
<comment type="similarity">
    <text evidence="8">Belongs to the bacterial ribosomal protein bL19 family.</text>
</comment>
<reference key="1">
    <citation type="journal article" date="1999" name="Science">
        <title>Genome sequence of the radioresistant bacterium Deinococcus radiodurans R1.</title>
        <authorList>
            <person name="White O."/>
            <person name="Eisen J.A."/>
            <person name="Heidelberg J.F."/>
            <person name="Hickey E.K."/>
            <person name="Peterson J.D."/>
            <person name="Dodson R.J."/>
            <person name="Haft D.H."/>
            <person name="Gwinn M.L."/>
            <person name="Nelson W.C."/>
            <person name="Richardson D.L."/>
            <person name="Moffat K.S."/>
            <person name="Qin H."/>
            <person name="Jiang L."/>
            <person name="Pamphile W."/>
            <person name="Crosby M."/>
            <person name="Shen M."/>
            <person name="Vamathevan J.J."/>
            <person name="Lam P."/>
            <person name="McDonald L.A."/>
            <person name="Utterback T.R."/>
            <person name="Zalewski C."/>
            <person name="Makarova K.S."/>
            <person name="Aravind L."/>
            <person name="Daly M.J."/>
            <person name="Minton K.W."/>
            <person name="Fleischmann R.D."/>
            <person name="Ketchum K.A."/>
            <person name="Nelson K.E."/>
            <person name="Salzberg S.L."/>
            <person name="Smith H.O."/>
            <person name="Venter J.C."/>
            <person name="Fraser C.M."/>
        </authorList>
    </citation>
    <scope>NUCLEOTIDE SEQUENCE [LARGE SCALE GENOMIC DNA]</scope>
    <source>
        <strain>ATCC 13939 / DSM 20539 / JCM 16871 / CCUG 27074 / LMG 4051 / NBRC 15346 / NCIMB 9279 / VKM B-1422 / R1</strain>
    </source>
</reference>
<reference key="2">
    <citation type="journal article" date="2001" name="Cell">
        <title>High resolution structure of the large ribosomal subunit from a mesophilic eubacterium.</title>
        <authorList>
            <person name="Harms J."/>
            <person name="Schluenzen F."/>
            <person name="Zarivach R."/>
            <person name="Bashan A."/>
            <person name="Gat S."/>
            <person name="Agmon I."/>
            <person name="Bartels H."/>
            <person name="Franceschi F."/>
            <person name="Yonath A."/>
        </authorList>
    </citation>
    <scope>X-RAY CRYSTALLOGRAPHY (3.1 ANGSTROMS) OF THE 50S SUBUNIT</scope>
    <scope>PROTEIN SEQUENCE OF 1-5</scope>
    <source>
        <strain>ATCC 13939 / DSM 20539 / JCM 16871 / CCUG 27074 / LMG 4051 / NBRC 15346 / NCIMB 9279 / VKM B-1422 / R1</strain>
    </source>
</reference>
<reference key="3">
    <citation type="journal article" date="2001" name="Nature">
        <title>Structural basis for the interaction of antibiotics with the peptidyl transferase centre in eubacteria.</title>
        <authorList>
            <person name="Schluenzen F."/>
            <person name="Zarivach R."/>
            <person name="Harms J."/>
            <person name="Bashan A."/>
            <person name="Tocilj A."/>
            <person name="Albrecht R."/>
            <person name="Yonath A."/>
            <person name="Franceschi F."/>
        </authorList>
    </citation>
    <scope>X-RAY CRYSTALLOGRAPHY (3.1 ANGSTROMS) OF THE 50S SUBUNIT IN COMPLEX WITH FIVE ANTIBIOTICS</scope>
    <source>
        <strain>ATCC 13939 / DSM 20539 / JCM 16871 / CCUG 27074 / LMG 4051 / NBRC 15346 / NCIMB 9279 / VKM B-1422 / R1</strain>
    </source>
</reference>
<reference key="4">
    <citation type="journal article" date="2003" name="Mol. Cell">
        <title>Structural basis of the ribosomal machinery for peptide bond formation, translocation, and nascent chain progression.</title>
        <authorList>
            <person name="Bashan A."/>
            <person name="Agmon I."/>
            <person name="Zarivach R."/>
            <person name="Schluenzen F."/>
            <person name="Harms J."/>
            <person name="Berisio R."/>
            <person name="Bartels H."/>
            <person name="Franceschi F."/>
            <person name="Auerbach T."/>
            <person name="Hansen H.A."/>
            <person name="Kossoy E."/>
            <person name="Kessler M."/>
            <person name="Yonath A."/>
        </authorList>
    </citation>
    <scope>X-RAY CRYSTALLOGRAPHY (3.5 ANGSTROMS) OF THE 50S SUBUNIT IN COMPLEX WITH TRNA MIMICS</scope>
    <source>
        <strain>ATCC 13939 / DSM 20539 / JCM 16871 / CCUG 27074 / LMG 4051 / NBRC 15346 / NCIMB 9279 / VKM B-1422 / R1</strain>
    </source>
</reference>
<reference key="5">
    <citation type="journal article" date="2003" name="Structure">
        <title>Structural basis for the antibiotic activity of ketolides and azalides.</title>
        <authorList>
            <person name="Schluenzen F."/>
            <person name="Harms J.M."/>
            <person name="Franceschi F."/>
            <person name="Hansen H.A."/>
            <person name="Bartels H."/>
            <person name="Zarivach R."/>
            <person name="Yonath A."/>
        </authorList>
    </citation>
    <scope>X-RAY CRYSTALLOGRAPHY (3.3 ANGSTROMS) OF THE 50S SUBUNIT IN COMPLEX WITH MODIFIED MACROLIDE ANTIBIOTICS</scope>
    <source>
        <strain>ATCC 13939 / DSM 20539 / JCM 16871 / CCUG 27074 / LMG 4051 / NBRC 15346 / NCIMB 9279 / VKM B-1422 / R1</strain>
    </source>
</reference>
<reference key="6">
    <citation type="journal article" date="2003" name="Nat. Struct. Biol.">
        <title>Structural insight into the role of the ribosomal tunnel in cellular regulation.</title>
        <authorList>
            <person name="Berisio R."/>
            <person name="Schluenzen F."/>
            <person name="Harms J."/>
            <person name="Bashan A."/>
            <person name="Auerbach T."/>
            <person name="Baram D."/>
            <person name="Yonath A."/>
        </authorList>
    </citation>
    <scope>X-RAY CRYSTALLOGRAPHY (3.4 ANGSTROMS) OF THE 50S SUBUNIT IN COMPLEX WITH TROLEANDOMYCIN</scope>
    <source>
        <strain>ATCC 13939 / DSM 20539 / JCM 16871 / CCUG 27074 / LMG 4051 / NBRC 15346 / NCIMB 9279 / VKM B-1422 / R1</strain>
    </source>
</reference>
<reference key="7">
    <citation type="journal article" date="2004" name="BMC Biol.">
        <title>Alterations at the peptidyl transferase centre of the ribosome induced by the synergistic action of the streptogramins dalfopristin and quinupristin.</title>
        <authorList>
            <person name="Harms J.M."/>
            <person name="Schluenzen F."/>
            <person name="Fucini P."/>
            <person name="Bartels H."/>
            <person name="Yonath A."/>
        </authorList>
    </citation>
    <scope>X-RAY CRYSTALLOGRAPHY (3.4 ANGSTROMS) OF THE 50S SUBUNIT IN COMPLEX WITH THE STREPTOGRAMINS QUINUPRISTIN AND DALFOPRISTIN</scope>
    <source>
        <strain>ATCC 13939 / DSM 20539 / JCM 16871 / CCUG 27074 / LMG 4051 / NBRC 15346 / NCIMB 9279 / VKM B-1422 / R1</strain>
    </source>
</reference>
<reference key="8">
    <citation type="journal article" date="2004" name="Mol. Microbiol.">
        <title>Inhibition of peptide bond formation by pleuromutilins: the structure of the 50S ribosomal subunit from Deinococcus radiodurans in complex with tiamulin.</title>
        <authorList>
            <person name="Schluenzen F."/>
            <person name="Pyetan E."/>
            <person name="Fucini P."/>
            <person name="Yonath A."/>
            <person name="Harms J.M."/>
        </authorList>
    </citation>
    <scope>X-RAY CRYSTALLOGRAPHY (3.5 ANGSTROMS) OF THE 50S SUBUNIT IN COMPLEX WITH TIAMULIN</scope>
    <source>
        <strain>ATCC 13939 / DSM 20539 / JCM 16871 / CCUG 27074 / LMG 4051 / NBRC 15346 / NCIMB 9279 / VKM B-1422 / R1</strain>
    </source>
</reference>
<proteinExistence type="evidence at protein level"/>
<evidence type="ECO:0000250" key="1"/>
<evidence type="ECO:0000269" key="2">
    <source>
    </source>
</evidence>
<evidence type="ECO:0000269" key="3">
    <source>
    </source>
</evidence>
<evidence type="ECO:0000269" key="4">
    <source>
    </source>
</evidence>
<evidence type="ECO:0000269" key="5">
    <source>
    </source>
</evidence>
<evidence type="ECO:0000269" key="6">
    <source>
    </source>
</evidence>
<evidence type="ECO:0000269" key="7">
    <source>
    </source>
</evidence>
<evidence type="ECO:0000305" key="8"/>
<evidence type="ECO:0007829" key="9">
    <source>
        <dbReference type="PDB" id="2ZJR"/>
    </source>
</evidence>
<evidence type="ECO:0007829" key="10">
    <source>
        <dbReference type="PDB" id="5DM6"/>
    </source>
</evidence>
<evidence type="ECO:0007829" key="11">
    <source>
        <dbReference type="PDB" id="7A0S"/>
    </source>
</evidence>
<evidence type="ECO:0007829" key="12">
    <source>
        <dbReference type="PDB" id="7A18"/>
    </source>
</evidence>
<gene>
    <name type="primary">rplS</name>
    <name type="ordered locus">DR_0755</name>
</gene>
<accession>Q9RWB4</accession>